<feature type="chain" id="PRO_0000348916" description="Trehalose-6-phosphate synthase">
    <location>
        <begin position="1"/>
        <end position="473"/>
    </location>
</feature>
<feature type="region of interest" description="Disordered" evidence="2">
    <location>
        <begin position="454"/>
        <end position="473"/>
    </location>
</feature>
<feature type="binding site" evidence="1">
    <location>
        <position position="10"/>
    </location>
    <ligand>
        <name>D-glucose 6-phosphate</name>
        <dbReference type="ChEBI" id="CHEBI:61548"/>
    </ligand>
</feature>
<feature type="binding site" evidence="1">
    <location>
        <begin position="21"/>
        <end position="22"/>
    </location>
    <ligand>
        <name>UDP-alpha-D-glucose</name>
        <dbReference type="ChEBI" id="CHEBI:58885"/>
    </ligand>
</feature>
<feature type="binding site" evidence="1">
    <location>
        <position position="76"/>
    </location>
    <ligand>
        <name>D-glucose 6-phosphate</name>
        <dbReference type="ChEBI" id="CHEBI:61548"/>
    </ligand>
</feature>
<feature type="binding site" evidence="1">
    <location>
        <position position="130"/>
    </location>
    <ligand>
        <name>D-glucose 6-phosphate</name>
        <dbReference type="ChEBI" id="CHEBI:61548"/>
    </ligand>
</feature>
<feature type="binding site" evidence="1">
    <location>
        <position position="262"/>
    </location>
    <ligand>
        <name>UDP-alpha-D-glucose</name>
        <dbReference type="ChEBI" id="CHEBI:58885"/>
    </ligand>
</feature>
<feature type="binding site" evidence="1">
    <location>
        <position position="267"/>
    </location>
    <ligand>
        <name>UDP-alpha-D-glucose</name>
        <dbReference type="ChEBI" id="CHEBI:58885"/>
    </ligand>
</feature>
<feature type="binding site" evidence="1">
    <location>
        <position position="300"/>
    </location>
    <ligand>
        <name>D-glucose 6-phosphate</name>
        <dbReference type="ChEBI" id="CHEBI:61548"/>
    </ligand>
</feature>
<feature type="binding site" evidence="1">
    <location>
        <position position="339"/>
    </location>
    <ligand>
        <name>UDP-alpha-D-glucose</name>
        <dbReference type="ChEBI" id="CHEBI:58885"/>
    </ligand>
</feature>
<feature type="binding site" evidence="1">
    <location>
        <begin position="365"/>
        <end position="369"/>
    </location>
    <ligand>
        <name>UDP-alpha-D-glucose</name>
        <dbReference type="ChEBI" id="CHEBI:58885"/>
    </ligand>
</feature>
<feature type="site" description="Involved in alpha anomer selectivity" evidence="1">
    <location>
        <position position="85"/>
    </location>
</feature>
<feature type="site" description="Involved in alpha anomer selectivity" evidence="1">
    <location>
        <position position="155"/>
    </location>
</feature>
<reference key="1">
    <citation type="journal article" date="2005" name="Nucleic Acids Res.">
        <title>The genome sequence of Salmonella enterica serovar Choleraesuis, a highly invasive and resistant zoonotic pathogen.</title>
        <authorList>
            <person name="Chiu C.-H."/>
            <person name="Tang P."/>
            <person name="Chu C."/>
            <person name="Hu S."/>
            <person name="Bao Q."/>
            <person name="Yu J."/>
            <person name="Chou Y.-Y."/>
            <person name="Wang H.-S."/>
            <person name="Lee Y.-S."/>
        </authorList>
    </citation>
    <scope>NUCLEOTIDE SEQUENCE [LARGE SCALE GENOMIC DNA]</scope>
    <source>
        <strain>SC-B67</strain>
    </source>
</reference>
<protein>
    <recommendedName>
        <fullName evidence="1">Trehalose-6-phosphate synthase</fullName>
        <shortName evidence="1">TPS</shortName>
        <ecNumber evidence="1">2.4.1.15</ecNumber>
    </recommendedName>
    <alternativeName>
        <fullName evidence="1">Alpha,alpha-trehalose-phosphate synthase [UDP-forming]</fullName>
    </alternativeName>
    <alternativeName>
        <fullName evidence="1">Osmoregulatory trehalose synthesis protein A</fullName>
        <shortName evidence="1">OtsA</shortName>
    </alternativeName>
    <alternativeName>
        <fullName evidence="1">UDP-glucose-glucosephosphate glucosyltransferase</fullName>
    </alternativeName>
</protein>
<accession>Q57N70</accession>
<sequence>MSRLVVVSNRIAPPDNKGGAGGLAVGVLGALKAAGGLWFGWSGETGNEDEPLKKVTKGNITWASFNLSEQDYEDYYCQFSNAVLWPAFHYRLDLVQFQRPAWEGYMRVNALLADKLLPLIKENDIIWVHDYHLLPFASELRKRGVNNRIGFFLHIPFPTPEIFNALPPHDELLEQLCDFDLLGFQTENDRLAFLDSLLSQTRVTTRSGKQHIAWGKDFQTEVYPIGIEPDEIALQAAGPLPPKLAQLKAELKNVKNIFSVERLDYSKGLPERFLAYEALLENYPQHRGKIRYTQIAPTSRGEVQAYQDIRHQLETEAGRINGKYGQLGWTPLYYLNQHFDRKLLMKIFRYSDVGLVTPLRDGMNLVAKEFVAAQDPANPGVLVLSQFAGAANELTSALIVNPYDRDDVAAALNRALTMPLAERISRHAEMLDVIVKNDINRWQERFIHDLKEVTPRSPERQQQNNVATFPKLA</sequence>
<proteinExistence type="inferred from homology"/>
<dbReference type="EC" id="2.4.1.15" evidence="1"/>
<dbReference type="EMBL" id="AE017220">
    <property type="protein sequence ID" value="AAX65841.1"/>
    <property type="molecule type" value="Genomic_DNA"/>
</dbReference>
<dbReference type="RefSeq" id="WP_000089037.1">
    <property type="nucleotide sequence ID" value="NC_006905.1"/>
</dbReference>
<dbReference type="SMR" id="Q57N70"/>
<dbReference type="CAZy" id="GT20">
    <property type="family name" value="Glycosyltransferase Family 20"/>
</dbReference>
<dbReference type="KEGG" id="sec:SCH_1935"/>
<dbReference type="HOGENOM" id="CLU_002351_7_1_6"/>
<dbReference type="UniPathway" id="UPA00299"/>
<dbReference type="Proteomes" id="UP000000538">
    <property type="component" value="Chromosome"/>
</dbReference>
<dbReference type="GO" id="GO:0003825">
    <property type="term" value="F:alpha,alpha-trehalose-phosphate synthase (UDP-forming) activity"/>
    <property type="evidence" value="ECO:0007669"/>
    <property type="project" value="UniProtKB-EC"/>
</dbReference>
<dbReference type="GO" id="GO:0005992">
    <property type="term" value="P:trehalose biosynthetic process"/>
    <property type="evidence" value="ECO:0007669"/>
    <property type="project" value="UniProtKB-UniPathway"/>
</dbReference>
<dbReference type="CDD" id="cd03788">
    <property type="entry name" value="GT20_TPS"/>
    <property type="match status" value="1"/>
</dbReference>
<dbReference type="FunFam" id="3.40.50.2000:FF:000024">
    <property type="entry name" value="Trehalose-6-phosphate synthase"/>
    <property type="match status" value="1"/>
</dbReference>
<dbReference type="Gene3D" id="3.40.50.2000">
    <property type="entry name" value="Glycogen Phosphorylase B"/>
    <property type="match status" value="2"/>
</dbReference>
<dbReference type="InterPro" id="IPR001830">
    <property type="entry name" value="Glyco_trans_20"/>
</dbReference>
<dbReference type="InterPro" id="IPR012766">
    <property type="entry name" value="Trehalose_OtsA"/>
</dbReference>
<dbReference type="NCBIfam" id="NF007513">
    <property type="entry name" value="PRK10117.1"/>
    <property type="match status" value="1"/>
</dbReference>
<dbReference type="NCBIfam" id="TIGR02400">
    <property type="entry name" value="trehalose_OtsA"/>
    <property type="match status" value="1"/>
</dbReference>
<dbReference type="PANTHER" id="PTHR10788:SF106">
    <property type="entry name" value="BCDNA.GH08860"/>
    <property type="match status" value="1"/>
</dbReference>
<dbReference type="PANTHER" id="PTHR10788">
    <property type="entry name" value="TREHALOSE-6-PHOSPHATE SYNTHASE"/>
    <property type="match status" value="1"/>
</dbReference>
<dbReference type="Pfam" id="PF00982">
    <property type="entry name" value="Glyco_transf_20"/>
    <property type="match status" value="1"/>
</dbReference>
<dbReference type="SUPFAM" id="SSF53756">
    <property type="entry name" value="UDP-Glycosyltransferase/glycogen phosphorylase"/>
    <property type="match status" value="1"/>
</dbReference>
<evidence type="ECO:0000250" key="1">
    <source>
        <dbReference type="UniProtKB" id="P31677"/>
    </source>
</evidence>
<evidence type="ECO:0000256" key="2">
    <source>
        <dbReference type="SAM" id="MobiDB-lite"/>
    </source>
</evidence>
<name>OTSA_SALCH</name>
<keyword id="KW-0328">Glycosyltransferase</keyword>
<keyword id="KW-0808">Transferase</keyword>
<comment type="function">
    <text evidence="1">Probably involved in the osmoprotection via the biosynthesis of trehalose. Catalyzes the transfer of glucose from UDP-alpha-D-glucose (UDP-Glc) to D-glucose 6-phosphate (Glc-6-P) to form trehalose-6-phosphate. Acts with retention of the anomeric configuration of the UDP-sugar donor.</text>
</comment>
<comment type="catalytic activity">
    <reaction evidence="1">
        <text>D-glucose 6-phosphate + UDP-alpha-D-glucose = alpha,alpha-trehalose 6-phosphate + UDP + H(+)</text>
        <dbReference type="Rhea" id="RHEA:18889"/>
        <dbReference type="ChEBI" id="CHEBI:15378"/>
        <dbReference type="ChEBI" id="CHEBI:58223"/>
        <dbReference type="ChEBI" id="CHEBI:58429"/>
        <dbReference type="ChEBI" id="CHEBI:58885"/>
        <dbReference type="ChEBI" id="CHEBI:61548"/>
        <dbReference type="EC" id="2.4.1.15"/>
    </reaction>
</comment>
<comment type="pathway">
    <text evidence="1">Glycan biosynthesis; trehalose biosynthesis.</text>
</comment>
<comment type="subunit">
    <text evidence="1">Homotetramer.</text>
</comment>
<comment type="similarity">
    <text evidence="1">Belongs to the glycosyltransferase 20 family.</text>
</comment>
<gene>
    <name evidence="1" type="primary">otsA</name>
    <name type="ordered locus">SCH_1935</name>
</gene>
<organism>
    <name type="scientific">Salmonella choleraesuis (strain SC-B67)</name>
    <dbReference type="NCBI Taxonomy" id="321314"/>
    <lineage>
        <taxon>Bacteria</taxon>
        <taxon>Pseudomonadati</taxon>
        <taxon>Pseudomonadota</taxon>
        <taxon>Gammaproteobacteria</taxon>
        <taxon>Enterobacterales</taxon>
        <taxon>Enterobacteriaceae</taxon>
        <taxon>Salmonella</taxon>
    </lineage>
</organism>